<name>IXTPA_BORBZ</name>
<keyword id="KW-0378">Hydrolase</keyword>
<keyword id="KW-0460">Magnesium</keyword>
<keyword id="KW-0479">Metal-binding</keyword>
<keyword id="KW-0546">Nucleotide metabolism</keyword>
<keyword id="KW-0547">Nucleotide-binding</keyword>
<proteinExistence type="inferred from homology"/>
<feature type="chain" id="PRO_1000145481" description="dITP/XTP pyrophosphatase">
    <location>
        <begin position="1"/>
        <end position="201"/>
    </location>
</feature>
<feature type="active site" description="Proton acceptor" evidence="1">
    <location>
        <position position="68"/>
    </location>
</feature>
<feature type="binding site" evidence="1">
    <location>
        <begin position="8"/>
        <end position="13"/>
    </location>
    <ligand>
        <name>substrate</name>
    </ligand>
</feature>
<feature type="binding site" evidence="1">
    <location>
        <position position="68"/>
    </location>
    <ligand>
        <name>Mg(2+)</name>
        <dbReference type="ChEBI" id="CHEBI:18420"/>
    </ligand>
</feature>
<feature type="binding site" evidence="1">
    <location>
        <position position="69"/>
    </location>
    <ligand>
        <name>substrate</name>
    </ligand>
</feature>
<feature type="binding site" evidence="1">
    <location>
        <begin position="155"/>
        <end position="158"/>
    </location>
    <ligand>
        <name>substrate</name>
    </ligand>
</feature>
<feature type="binding site" evidence="1">
    <location>
        <position position="177"/>
    </location>
    <ligand>
        <name>substrate</name>
    </ligand>
</feature>
<feature type="binding site" evidence="1">
    <location>
        <begin position="182"/>
        <end position="183"/>
    </location>
    <ligand>
        <name>substrate</name>
    </ligand>
</feature>
<reference key="1">
    <citation type="journal article" date="2011" name="J. Bacteriol.">
        <title>Whole-genome sequences of thirteen isolates of Borrelia burgdorferi.</title>
        <authorList>
            <person name="Schutzer S.E."/>
            <person name="Fraser-Liggett C.M."/>
            <person name="Casjens S.R."/>
            <person name="Qiu W.G."/>
            <person name="Dunn J.J."/>
            <person name="Mongodin E.F."/>
            <person name="Luft B.J."/>
        </authorList>
    </citation>
    <scope>NUCLEOTIDE SEQUENCE [LARGE SCALE GENOMIC DNA]</scope>
    <source>
        <strain>ZS7</strain>
    </source>
</reference>
<organism>
    <name type="scientific">Borreliella burgdorferi (strain ZS7)</name>
    <name type="common">Borrelia burgdorferi</name>
    <dbReference type="NCBI Taxonomy" id="445985"/>
    <lineage>
        <taxon>Bacteria</taxon>
        <taxon>Pseudomonadati</taxon>
        <taxon>Spirochaetota</taxon>
        <taxon>Spirochaetia</taxon>
        <taxon>Spirochaetales</taxon>
        <taxon>Borreliaceae</taxon>
        <taxon>Borreliella</taxon>
    </lineage>
</organism>
<comment type="function">
    <text evidence="1">Pyrophosphatase that catalyzes the hydrolysis of nucleoside triphosphates to their monophosphate derivatives, with a high preference for the non-canonical purine nucleotides XTP (xanthosine triphosphate), dITP (deoxyinosine triphosphate) and ITP. Seems to function as a house-cleaning enzyme that removes non-canonical purine nucleotides from the nucleotide pool, thus preventing their incorporation into DNA/RNA and avoiding chromosomal lesions.</text>
</comment>
<comment type="catalytic activity">
    <reaction evidence="1">
        <text>XTP + H2O = XMP + diphosphate + H(+)</text>
        <dbReference type="Rhea" id="RHEA:28610"/>
        <dbReference type="ChEBI" id="CHEBI:15377"/>
        <dbReference type="ChEBI" id="CHEBI:15378"/>
        <dbReference type="ChEBI" id="CHEBI:33019"/>
        <dbReference type="ChEBI" id="CHEBI:57464"/>
        <dbReference type="ChEBI" id="CHEBI:61314"/>
        <dbReference type="EC" id="3.6.1.66"/>
    </reaction>
</comment>
<comment type="catalytic activity">
    <reaction evidence="1">
        <text>dITP + H2O = dIMP + diphosphate + H(+)</text>
        <dbReference type="Rhea" id="RHEA:28342"/>
        <dbReference type="ChEBI" id="CHEBI:15377"/>
        <dbReference type="ChEBI" id="CHEBI:15378"/>
        <dbReference type="ChEBI" id="CHEBI:33019"/>
        <dbReference type="ChEBI" id="CHEBI:61194"/>
        <dbReference type="ChEBI" id="CHEBI:61382"/>
        <dbReference type="EC" id="3.6.1.66"/>
    </reaction>
</comment>
<comment type="catalytic activity">
    <reaction evidence="1">
        <text>ITP + H2O = IMP + diphosphate + H(+)</text>
        <dbReference type="Rhea" id="RHEA:29399"/>
        <dbReference type="ChEBI" id="CHEBI:15377"/>
        <dbReference type="ChEBI" id="CHEBI:15378"/>
        <dbReference type="ChEBI" id="CHEBI:33019"/>
        <dbReference type="ChEBI" id="CHEBI:58053"/>
        <dbReference type="ChEBI" id="CHEBI:61402"/>
        <dbReference type="EC" id="3.6.1.66"/>
    </reaction>
</comment>
<comment type="cofactor">
    <cofactor evidence="1">
        <name>Mg(2+)</name>
        <dbReference type="ChEBI" id="CHEBI:18420"/>
    </cofactor>
    <text evidence="1">Binds 1 Mg(2+) ion per subunit.</text>
</comment>
<comment type="subunit">
    <text evidence="1">Homodimer.</text>
</comment>
<comment type="similarity">
    <text evidence="1">Belongs to the HAM1 NTPase family.</text>
</comment>
<evidence type="ECO:0000255" key="1">
    <source>
        <dbReference type="HAMAP-Rule" id="MF_01405"/>
    </source>
</evidence>
<sequence>MKTLFFATTNENKINEVKNILDIPNLNLIVPQNFNIKETGKTFKENSLLKAKALFEILNNNQNVFGEDSGLCIEALNLEPGIYSKRYDTYKLCKKLSTNEKNQLILDLMKNEKNRKAYFICNISYISKNGQILNFEGIIKGKIALSLNDKKNYGFGYDSIFLTKNNKKLSDLTLEEKNKISHRGIAFLKFKKFLLKSLFNS</sequence>
<dbReference type="EC" id="3.6.1.66" evidence="1"/>
<dbReference type="EMBL" id="CP001205">
    <property type="protein sequence ID" value="ACK74711.1"/>
    <property type="molecule type" value="Genomic_DNA"/>
</dbReference>
<dbReference type="SMR" id="B7J1H5"/>
<dbReference type="KEGG" id="bbz:BbuZS7_0252"/>
<dbReference type="HOGENOM" id="CLU_082080_0_2_12"/>
<dbReference type="Proteomes" id="UP000006901">
    <property type="component" value="Chromosome"/>
</dbReference>
<dbReference type="GO" id="GO:0005829">
    <property type="term" value="C:cytosol"/>
    <property type="evidence" value="ECO:0007669"/>
    <property type="project" value="TreeGrafter"/>
</dbReference>
<dbReference type="GO" id="GO:0035870">
    <property type="term" value="F:dITP diphosphatase activity"/>
    <property type="evidence" value="ECO:0007669"/>
    <property type="project" value="RHEA"/>
</dbReference>
<dbReference type="GO" id="GO:0036220">
    <property type="term" value="F:ITP diphosphatase activity"/>
    <property type="evidence" value="ECO:0007669"/>
    <property type="project" value="UniProtKB-EC"/>
</dbReference>
<dbReference type="GO" id="GO:0046872">
    <property type="term" value="F:metal ion binding"/>
    <property type="evidence" value="ECO:0007669"/>
    <property type="project" value="UniProtKB-KW"/>
</dbReference>
<dbReference type="GO" id="GO:0000166">
    <property type="term" value="F:nucleotide binding"/>
    <property type="evidence" value="ECO:0007669"/>
    <property type="project" value="UniProtKB-KW"/>
</dbReference>
<dbReference type="GO" id="GO:0017111">
    <property type="term" value="F:ribonucleoside triphosphate phosphatase activity"/>
    <property type="evidence" value="ECO:0007669"/>
    <property type="project" value="InterPro"/>
</dbReference>
<dbReference type="GO" id="GO:0036222">
    <property type="term" value="F:XTP diphosphatase activity"/>
    <property type="evidence" value="ECO:0007669"/>
    <property type="project" value="RHEA"/>
</dbReference>
<dbReference type="GO" id="GO:0009117">
    <property type="term" value="P:nucleotide metabolic process"/>
    <property type="evidence" value="ECO:0007669"/>
    <property type="project" value="UniProtKB-KW"/>
</dbReference>
<dbReference type="GO" id="GO:0009146">
    <property type="term" value="P:purine nucleoside triphosphate catabolic process"/>
    <property type="evidence" value="ECO:0007669"/>
    <property type="project" value="UniProtKB-UniRule"/>
</dbReference>
<dbReference type="CDD" id="cd00515">
    <property type="entry name" value="HAM1"/>
    <property type="match status" value="1"/>
</dbReference>
<dbReference type="FunFam" id="3.90.950.10:FF:000001">
    <property type="entry name" value="dITP/XTP pyrophosphatase"/>
    <property type="match status" value="1"/>
</dbReference>
<dbReference type="Gene3D" id="3.90.950.10">
    <property type="match status" value="1"/>
</dbReference>
<dbReference type="HAMAP" id="MF_01405">
    <property type="entry name" value="Non_canon_purine_NTPase"/>
    <property type="match status" value="1"/>
</dbReference>
<dbReference type="InterPro" id="IPR020922">
    <property type="entry name" value="dITP/XTP_pyrophosphatase"/>
</dbReference>
<dbReference type="InterPro" id="IPR029001">
    <property type="entry name" value="ITPase-like_fam"/>
</dbReference>
<dbReference type="InterPro" id="IPR002637">
    <property type="entry name" value="RdgB/HAM1"/>
</dbReference>
<dbReference type="NCBIfam" id="NF011400">
    <property type="entry name" value="PRK14825.1"/>
    <property type="match status" value="1"/>
</dbReference>
<dbReference type="NCBIfam" id="TIGR00042">
    <property type="entry name" value="RdgB/HAM1 family non-canonical purine NTP pyrophosphatase"/>
    <property type="match status" value="1"/>
</dbReference>
<dbReference type="PANTHER" id="PTHR11067:SF9">
    <property type="entry name" value="INOSINE TRIPHOSPHATE PYROPHOSPHATASE"/>
    <property type="match status" value="1"/>
</dbReference>
<dbReference type="PANTHER" id="PTHR11067">
    <property type="entry name" value="INOSINE TRIPHOSPHATE PYROPHOSPHATASE/HAM1 PROTEIN"/>
    <property type="match status" value="1"/>
</dbReference>
<dbReference type="Pfam" id="PF01725">
    <property type="entry name" value="Ham1p_like"/>
    <property type="match status" value="1"/>
</dbReference>
<dbReference type="SUPFAM" id="SSF52972">
    <property type="entry name" value="ITPase-like"/>
    <property type="match status" value="1"/>
</dbReference>
<gene>
    <name type="ordered locus">BbuZS7_0252</name>
</gene>
<protein>
    <recommendedName>
        <fullName evidence="1">dITP/XTP pyrophosphatase</fullName>
        <ecNumber evidence="1">3.6.1.66</ecNumber>
    </recommendedName>
    <alternativeName>
        <fullName evidence="1">Non-canonical purine NTP pyrophosphatase</fullName>
    </alternativeName>
    <alternativeName>
        <fullName evidence="1">Non-standard purine NTP pyrophosphatase</fullName>
    </alternativeName>
    <alternativeName>
        <fullName evidence="1">Nucleoside-triphosphate diphosphatase</fullName>
    </alternativeName>
    <alternativeName>
        <fullName evidence="1">Nucleoside-triphosphate pyrophosphatase</fullName>
        <shortName evidence="1">NTPase</shortName>
    </alternativeName>
</protein>
<accession>B7J1H5</accession>